<keyword id="KW-0235">DNA replication</keyword>
<keyword id="KW-0238">DNA-binding</keyword>
<keyword id="KW-0639">Primosome</keyword>
<sequence length="164" mass="19155">MKILISDNISLELFCKNPIKILEKSNKGIIGVLKNKSPIFYVITPYILKKIFDLECNLLDLDKTKQQISKKFSMHPQWTPDKDFIRQAALWGITLTEEILESELASFISYWQAEGCFFHHIQWQQKLARSLQKSRSISYMSQKKRDITYIPTPDQTVPNGFRGK</sequence>
<feature type="chain" id="PRO_1000149686" description="Replication restart protein DnaT">
    <location>
        <begin position="1"/>
        <end position="164"/>
    </location>
</feature>
<dbReference type="EMBL" id="CP001161">
    <property type="protein sequence ID" value="ACL30407.1"/>
    <property type="molecule type" value="Genomic_DNA"/>
</dbReference>
<dbReference type="RefSeq" id="WP_009873983.1">
    <property type="nucleotide sequence ID" value="NC_011833.1"/>
</dbReference>
<dbReference type="SMR" id="B8D8I5"/>
<dbReference type="KEGG" id="bap:BUAP5A_022"/>
<dbReference type="HOGENOM" id="CLU_1501592_0_0_6"/>
<dbReference type="OrthoDB" id="6630498at2"/>
<dbReference type="Proteomes" id="UP000006904">
    <property type="component" value="Chromosome"/>
</dbReference>
<dbReference type="GO" id="GO:1990077">
    <property type="term" value="C:primosome complex"/>
    <property type="evidence" value="ECO:0007669"/>
    <property type="project" value="UniProtKB-KW"/>
</dbReference>
<dbReference type="GO" id="GO:0006269">
    <property type="term" value="P:DNA replication, synthesis of primer"/>
    <property type="evidence" value="ECO:0007669"/>
    <property type="project" value="UniProtKB-UniRule"/>
</dbReference>
<dbReference type="Gene3D" id="1.10.8.1180">
    <property type="match status" value="1"/>
</dbReference>
<dbReference type="HAMAP" id="MF_01061">
    <property type="entry name" value="DnaT"/>
    <property type="match status" value="1"/>
</dbReference>
<dbReference type="InterPro" id="IPR020917">
    <property type="entry name" value="DnaT"/>
</dbReference>
<dbReference type="InterPro" id="IPR040480">
    <property type="entry name" value="DnaT_DNA_bind"/>
</dbReference>
<dbReference type="NCBIfam" id="NF002770">
    <property type="entry name" value="PRK02854.1"/>
    <property type="match status" value="1"/>
</dbReference>
<dbReference type="Pfam" id="PF17948">
    <property type="entry name" value="DnaT"/>
    <property type="match status" value="1"/>
</dbReference>
<comment type="function">
    <text evidence="1">Involved in the restart of stalled replication forks, which reloads the replicative helicase on sites other than the origin of replication. Can function in multiple replication restart pathways. Displaces ssDNA from a PriB-ssDNA complex. Probably forms a spiral filament on ssDNA.</text>
</comment>
<comment type="subunit">
    <text evidence="1">Homooligomerizes. Interacts with PriB. Component of the replication restart primosome. Primosome assembly occurs via a 'hand-off' mechanism. PriA binds to replication forks, subsequently PriB then DnaT bind; DnaT then displaces ssDNA to generate the helicase loading substrate.</text>
</comment>
<comment type="similarity">
    <text evidence="1">Belongs to the DnaT family.</text>
</comment>
<accession>B8D8I5</accession>
<proteinExistence type="inferred from homology"/>
<protein>
    <recommendedName>
        <fullName evidence="1">Replication restart protein DnaT</fullName>
    </recommendedName>
</protein>
<evidence type="ECO:0000255" key="1">
    <source>
        <dbReference type="HAMAP-Rule" id="MF_01061"/>
    </source>
</evidence>
<organism>
    <name type="scientific">Buchnera aphidicola subsp. Acyrthosiphon pisum (strain 5A)</name>
    <dbReference type="NCBI Taxonomy" id="563178"/>
    <lineage>
        <taxon>Bacteria</taxon>
        <taxon>Pseudomonadati</taxon>
        <taxon>Pseudomonadota</taxon>
        <taxon>Gammaproteobacteria</taxon>
        <taxon>Enterobacterales</taxon>
        <taxon>Erwiniaceae</taxon>
        <taxon>Buchnera</taxon>
    </lineage>
</organism>
<name>DNAT_BUCA5</name>
<reference key="1">
    <citation type="journal article" date="2009" name="Science">
        <title>The dynamics and time scale of ongoing genomic erosion in symbiotic bacteria.</title>
        <authorList>
            <person name="Moran N.A."/>
            <person name="McLaughlin H.J."/>
            <person name="Sorek R."/>
        </authorList>
    </citation>
    <scope>NUCLEOTIDE SEQUENCE [LARGE SCALE GENOMIC DNA]</scope>
    <source>
        <strain>5A</strain>
    </source>
</reference>
<gene>
    <name evidence="1" type="primary">dnaT</name>
    <name type="ordered locus">BUAP5A_022</name>
</gene>